<dbReference type="EMBL" id="M64373">
    <property type="protein sequence ID" value="AAA40806.1"/>
    <property type="molecule type" value="mRNA"/>
</dbReference>
<dbReference type="EMBL" id="M99222">
    <property type="protein sequence ID" value="AAA40896.1"/>
    <property type="molecule type" value="mRNA"/>
</dbReference>
<dbReference type="PIR" id="A41098">
    <property type="entry name" value="A41098"/>
</dbReference>
<dbReference type="RefSeq" id="NP_037050.2">
    <property type="nucleotide sequence ID" value="NM_012918.3"/>
</dbReference>
<dbReference type="BMRB" id="P54282"/>
<dbReference type="SMR" id="P54282"/>
<dbReference type="BioGRID" id="247433">
    <property type="interactions" value="4"/>
</dbReference>
<dbReference type="CORUM" id="P54282"/>
<dbReference type="DIP" id="DIP-29638N"/>
<dbReference type="FunCoup" id="P54282">
    <property type="interactions" value="1971"/>
</dbReference>
<dbReference type="IntAct" id="P54282">
    <property type="interactions" value="3"/>
</dbReference>
<dbReference type="STRING" id="10116.ENSRNOP00000070304"/>
<dbReference type="DrugCentral" id="P54282"/>
<dbReference type="GuidetoPHARMACOLOGY" id="532"/>
<dbReference type="TCDB" id="1.A.1.11.8">
    <property type="family name" value="the voltage-gated ion channel (vic) superfamily"/>
</dbReference>
<dbReference type="GlyCosmos" id="P54282">
    <property type="glycosylation" value="2 sites, No reported glycans"/>
</dbReference>
<dbReference type="GlyGen" id="P54282">
    <property type="glycosylation" value="4 sites"/>
</dbReference>
<dbReference type="iPTMnet" id="P54282"/>
<dbReference type="PhosphoSitePlus" id="P54282"/>
<dbReference type="PaxDb" id="10116-ENSRNOP00000059641"/>
<dbReference type="GeneID" id="25398"/>
<dbReference type="KEGG" id="rno:25398"/>
<dbReference type="AGR" id="RGD:2244"/>
<dbReference type="CTD" id="773"/>
<dbReference type="RGD" id="2244">
    <property type="gene designation" value="Cacna1a"/>
</dbReference>
<dbReference type="eggNOG" id="KOG2301">
    <property type="taxonomic scope" value="Eukaryota"/>
</dbReference>
<dbReference type="InParanoid" id="P54282"/>
<dbReference type="PhylomeDB" id="P54282"/>
<dbReference type="Reactome" id="R-RNO-112308">
    <property type="pathway name" value="Presynaptic depolarization and calcium channel opening"/>
</dbReference>
<dbReference type="Reactome" id="R-RNO-422356">
    <property type="pathway name" value="Regulation of insulin secretion"/>
</dbReference>
<dbReference type="PRO" id="PR:P54282"/>
<dbReference type="Proteomes" id="UP000002494">
    <property type="component" value="Unplaced"/>
</dbReference>
<dbReference type="GO" id="GO:0044305">
    <property type="term" value="C:calyx of Held"/>
    <property type="evidence" value="ECO:0000314"/>
    <property type="project" value="SynGO"/>
</dbReference>
<dbReference type="GO" id="GO:0042995">
    <property type="term" value="C:cell projection"/>
    <property type="evidence" value="ECO:0000266"/>
    <property type="project" value="RGD"/>
</dbReference>
<dbReference type="GO" id="GO:0005737">
    <property type="term" value="C:cytoplasm"/>
    <property type="evidence" value="ECO:0000266"/>
    <property type="project" value="RGD"/>
</dbReference>
<dbReference type="GO" id="GO:0030425">
    <property type="term" value="C:dendrite"/>
    <property type="evidence" value="ECO:0000266"/>
    <property type="project" value="RGD"/>
</dbReference>
<dbReference type="GO" id="GO:0098978">
    <property type="term" value="C:glutamatergic synapse"/>
    <property type="evidence" value="ECO:0000266"/>
    <property type="project" value="RGD"/>
</dbReference>
<dbReference type="GO" id="GO:0043025">
    <property type="term" value="C:neuronal cell body"/>
    <property type="evidence" value="ECO:0000314"/>
    <property type="project" value="ARUK-UCL"/>
</dbReference>
<dbReference type="GO" id="GO:0005634">
    <property type="term" value="C:nucleus"/>
    <property type="evidence" value="ECO:0000266"/>
    <property type="project" value="RGD"/>
</dbReference>
<dbReference type="GO" id="GO:0043204">
    <property type="term" value="C:perikaryon"/>
    <property type="evidence" value="ECO:0000314"/>
    <property type="project" value="RGD"/>
</dbReference>
<dbReference type="GO" id="GO:0005886">
    <property type="term" value="C:plasma membrane"/>
    <property type="evidence" value="ECO:0000266"/>
    <property type="project" value="RGD"/>
</dbReference>
<dbReference type="GO" id="GO:0045211">
    <property type="term" value="C:postsynaptic membrane"/>
    <property type="evidence" value="ECO:0000266"/>
    <property type="project" value="RGD"/>
</dbReference>
<dbReference type="GO" id="GO:0048787">
    <property type="term" value="C:presynaptic active zone membrane"/>
    <property type="evidence" value="ECO:0000314"/>
    <property type="project" value="SynGO"/>
</dbReference>
<dbReference type="GO" id="GO:0032991">
    <property type="term" value="C:protein-containing complex"/>
    <property type="evidence" value="ECO:0000314"/>
    <property type="project" value="RGD"/>
</dbReference>
<dbReference type="GO" id="GO:0005891">
    <property type="term" value="C:voltage-gated calcium channel complex"/>
    <property type="evidence" value="ECO:0000314"/>
    <property type="project" value="RGD"/>
</dbReference>
<dbReference type="GO" id="GO:0005516">
    <property type="term" value="F:calmodulin binding"/>
    <property type="evidence" value="ECO:0000314"/>
    <property type="project" value="UniProtKB"/>
</dbReference>
<dbReference type="GO" id="GO:0008331">
    <property type="term" value="F:high voltage-gated calcium channel activity"/>
    <property type="evidence" value="ECO:0000314"/>
    <property type="project" value="RGD"/>
</dbReference>
<dbReference type="GO" id="GO:0046872">
    <property type="term" value="F:metal ion binding"/>
    <property type="evidence" value="ECO:0007669"/>
    <property type="project" value="UniProtKB-KW"/>
</dbReference>
<dbReference type="GO" id="GO:0019905">
    <property type="term" value="F:syntaxin binding"/>
    <property type="evidence" value="ECO:0000266"/>
    <property type="project" value="RGD"/>
</dbReference>
<dbReference type="GO" id="GO:0005245">
    <property type="term" value="F:voltage-gated calcium channel activity"/>
    <property type="evidence" value="ECO:0000314"/>
    <property type="project" value="UniProtKB"/>
</dbReference>
<dbReference type="GO" id="GO:0099626">
    <property type="term" value="F:voltage-gated calcium channel activity involved in regulation of presynaptic cytosolic calcium levels"/>
    <property type="evidence" value="ECO:0000266"/>
    <property type="project" value="RGD"/>
</dbReference>
<dbReference type="GO" id="GO:0007628">
    <property type="term" value="P:adult walking behavior"/>
    <property type="evidence" value="ECO:0000266"/>
    <property type="project" value="RGD"/>
</dbReference>
<dbReference type="GO" id="GO:0048266">
    <property type="term" value="P:behavioral response to pain"/>
    <property type="evidence" value="ECO:0000266"/>
    <property type="project" value="RGD"/>
</dbReference>
<dbReference type="GO" id="GO:0070509">
    <property type="term" value="P:calcium ion import"/>
    <property type="evidence" value="ECO:0000314"/>
    <property type="project" value="RGD"/>
</dbReference>
<dbReference type="GO" id="GO:0098703">
    <property type="term" value="P:calcium ion import across plasma membrane"/>
    <property type="evidence" value="ECO:0000318"/>
    <property type="project" value="GO_Central"/>
</dbReference>
<dbReference type="GO" id="GO:0070588">
    <property type="term" value="P:calcium ion transmembrane transport"/>
    <property type="evidence" value="ECO:0000266"/>
    <property type="project" value="RGD"/>
</dbReference>
<dbReference type="GO" id="GO:0006816">
    <property type="term" value="P:calcium ion transport"/>
    <property type="evidence" value="ECO:0000314"/>
    <property type="project" value="RGD"/>
</dbReference>
<dbReference type="GO" id="GO:0048791">
    <property type="term" value="P:calcium ion-regulated exocytosis of neurotransmitter"/>
    <property type="evidence" value="ECO:0000266"/>
    <property type="project" value="RGD"/>
</dbReference>
<dbReference type="GO" id="GO:0017156">
    <property type="term" value="P:calcium-ion regulated exocytosis"/>
    <property type="evidence" value="ECO:0000266"/>
    <property type="project" value="RGD"/>
</dbReference>
<dbReference type="GO" id="GO:1904646">
    <property type="term" value="P:cellular response to amyloid-beta"/>
    <property type="evidence" value="ECO:0000266"/>
    <property type="project" value="RGD"/>
</dbReference>
<dbReference type="GO" id="GO:0021953">
    <property type="term" value="P:central nervous system neuron differentiation"/>
    <property type="evidence" value="ECO:0000266"/>
    <property type="project" value="RGD"/>
</dbReference>
<dbReference type="GO" id="GO:0021679">
    <property type="term" value="P:cerebellar molecular layer development"/>
    <property type="evidence" value="ECO:0000266"/>
    <property type="project" value="RGD"/>
</dbReference>
<dbReference type="GO" id="GO:0021702">
    <property type="term" value="P:cerebellar Purkinje cell differentiation"/>
    <property type="evidence" value="ECO:0000266"/>
    <property type="project" value="RGD"/>
</dbReference>
<dbReference type="GO" id="GO:0021680">
    <property type="term" value="P:cerebellar Purkinje cell layer development"/>
    <property type="evidence" value="ECO:0000266"/>
    <property type="project" value="RGD"/>
</dbReference>
<dbReference type="GO" id="GO:0021590">
    <property type="term" value="P:cerebellum maturation"/>
    <property type="evidence" value="ECO:0000266"/>
    <property type="project" value="RGD"/>
</dbReference>
<dbReference type="GO" id="GO:0007268">
    <property type="term" value="P:chemical synaptic transmission"/>
    <property type="evidence" value="ECO:0000315"/>
    <property type="project" value="RGD"/>
</dbReference>
<dbReference type="GO" id="GO:0048813">
    <property type="term" value="P:dendrite morphogenesis"/>
    <property type="evidence" value="ECO:0000266"/>
    <property type="project" value="RGD"/>
</dbReference>
<dbReference type="GO" id="GO:0051649">
    <property type="term" value="P:establishment of localization in cell"/>
    <property type="evidence" value="ECO:0000266"/>
    <property type="project" value="RGD"/>
</dbReference>
<dbReference type="GO" id="GO:0014051">
    <property type="term" value="P:gamma-aminobutyric acid secretion"/>
    <property type="evidence" value="ECO:0000266"/>
    <property type="project" value="RGD"/>
</dbReference>
<dbReference type="GO" id="GO:0007214">
    <property type="term" value="P:gamma-aminobutyric acid signaling pathway"/>
    <property type="evidence" value="ECO:0000266"/>
    <property type="project" value="RGD"/>
</dbReference>
<dbReference type="GO" id="GO:0042593">
    <property type="term" value="P:glucose homeostasis"/>
    <property type="evidence" value="ECO:0000266"/>
    <property type="project" value="RGD"/>
</dbReference>
<dbReference type="GO" id="GO:0042446">
    <property type="term" value="P:hormone biosynthetic process"/>
    <property type="evidence" value="ECO:0000266"/>
    <property type="project" value="RGD"/>
</dbReference>
<dbReference type="GO" id="GO:0030644">
    <property type="term" value="P:intracellular chloride ion homeostasis"/>
    <property type="evidence" value="ECO:0000266"/>
    <property type="project" value="RGD"/>
</dbReference>
<dbReference type="GO" id="GO:0051899">
    <property type="term" value="P:membrane depolarization"/>
    <property type="evidence" value="ECO:0000266"/>
    <property type="project" value="RGD"/>
</dbReference>
<dbReference type="GO" id="GO:0050804">
    <property type="term" value="P:modulation of chemical synaptic transmission"/>
    <property type="evidence" value="ECO:0000266"/>
    <property type="project" value="RGD"/>
</dbReference>
<dbReference type="GO" id="GO:0050883">
    <property type="term" value="P:musculoskeletal movement, spinal reflex action"/>
    <property type="evidence" value="ECO:0000266"/>
    <property type="project" value="RGD"/>
</dbReference>
<dbReference type="GO" id="GO:0032353">
    <property type="term" value="P:negative regulation of hormone biosynthetic process"/>
    <property type="evidence" value="ECO:0000266"/>
    <property type="project" value="RGD"/>
</dbReference>
<dbReference type="GO" id="GO:0043524">
    <property type="term" value="P:negative regulation of neuron apoptotic process"/>
    <property type="evidence" value="ECO:0000266"/>
    <property type="project" value="RGD"/>
</dbReference>
<dbReference type="GO" id="GO:0050877">
    <property type="term" value="P:nervous system process"/>
    <property type="evidence" value="ECO:0000266"/>
    <property type="project" value="RGD"/>
</dbReference>
<dbReference type="GO" id="GO:0050905">
    <property type="term" value="P:neuromuscular process"/>
    <property type="evidence" value="ECO:0000266"/>
    <property type="project" value="RGD"/>
</dbReference>
<dbReference type="GO" id="GO:0050885">
    <property type="term" value="P:neuromuscular process controlling balance"/>
    <property type="evidence" value="ECO:0000266"/>
    <property type="project" value="RGD"/>
</dbReference>
<dbReference type="GO" id="GO:0007274">
    <property type="term" value="P:neuromuscular synaptic transmission"/>
    <property type="evidence" value="ECO:0000266"/>
    <property type="project" value="RGD"/>
</dbReference>
<dbReference type="GO" id="GO:0051402">
    <property type="term" value="P:neuron apoptotic process"/>
    <property type="evidence" value="ECO:0000266"/>
    <property type="project" value="RGD"/>
</dbReference>
<dbReference type="GO" id="GO:0070050">
    <property type="term" value="P:neuron cellular homeostasis"/>
    <property type="evidence" value="ECO:0000266"/>
    <property type="project" value="RGD"/>
</dbReference>
<dbReference type="GO" id="GO:0007270">
    <property type="term" value="P:neuron-neuron synaptic transmission"/>
    <property type="evidence" value="ECO:0000266"/>
    <property type="project" value="RGD"/>
</dbReference>
<dbReference type="GO" id="GO:0007204">
    <property type="term" value="P:positive regulation of cytosolic calcium ion concentration"/>
    <property type="evidence" value="ECO:0000250"/>
    <property type="project" value="UniProtKB"/>
</dbReference>
<dbReference type="GO" id="GO:0043113">
    <property type="term" value="P:receptor clustering"/>
    <property type="evidence" value="ECO:0000266"/>
    <property type="project" value="RGD"/>
</dbReference>
<dbReference type="GO" id="GO:0014056">
    <property type="term" value="P:regulation of acetylcholine secretion, neurotransmission"/>
    <property type="evidence" value="ECO:0000266"/>
    <property type="project" value="RGD"/>
</dbReference>
<dbReference type="GO" id="GO:0050770">
    <property type="term" value="P:regulation of axonogenesis"/>
    <property type="evidence" value="ECO:0000266"/>
    <property type="project" value="RGD"/>
</dbReference>
<dbReference type="GO" id="GO:0017158">
    <property type="term" value="P:regulation of calcium ion-dependent exocytosis"/>
    <property type="evidence" value="ECO:0000266"/>
    <property type="project" value="RGD"/>
</dbReference>
<dbReference type="GO" id="GO:0010817">
    <property type="term" value="P:regulation of hormone levels"/>
    <property type="evidence" value="ECO:0000266"/>
    <property type="project" value="RGD"/>
</dbReference>
<dbReference type="GO" id="GO:0042391">
    <property type="term" value="P:regulation of membrane potential"/>
    <property type="evidence" value="ECO:0000266"/>
    <property type="project" value="RGD"/>
</dbReference>
<dbReference type="GO" id="GO:0031335">
    <property type="term" value="P:regulation of sulfur amino acid metabolic process"/>
    <property type="evidence" value="ECO:0000266"/>
    <property type="project" value="RGD"/>
</dbReference>
<dbReference type="GO" id="GO:1904645">
    <property type="term" value="P:response to amyloid-beta"/>
    <property type="evidence" value="ECO:0000266"/>
    <property type="project" value="RGD"/>
</dbReference>
<dbReference type="GO" id="GO:0048265">
    <property type="term" value="P:response to pain"/>
    <property type="evidence" value="ECO:0000266"/>
    <property type="project" value="RGD"/>
</dbReference>
<dbReference type="GO" id="GO:0060024">
    <property type="term" value="P:rhythmic synaptic transmission"/>
    <property type="evidence" value="ECO:0000266"/>
    <property type="project" value="RGD"/>
</dbReference>
<dbReference type="GO" id="GO:0021522">
    <property type="term" value="P:spinal cord motor neuron differentiation"/>
    <property type="evidence" value="ECO:0000266"/>
    <property type="project" value="RGD"/>
</dbReference>
<dbReference type="GO" id="GO:0007416">
    <property type="term" value="P:synapse assembly"/>
    <property type="evidence" value="ECO:0000266"/>
    <property type="project" value="RGD"/>
</dbReference>
<dbReference type="GO" id="GO:0035249">
    <property type="term" value="P:synaptic transmission, glutamatergic"/>
    <property type="evidence" value="ECO:0000266"/>
    <property type="project" value="RGD"/>
</dbReference>
<dbReference type="GO" id="GO:0019226">
    <property type="term" value="P:transmission of nerve impulse"/>
    <property type="evidence" value="ECO:0000266"/>
    <property type="project" value="RGD"/>
</dbReference>
<dbReference type="GO" id="GO:0021750">
    <property type="term" value="P:vestibular nucleus development"/>
    <property type="evidence" value="ECO:0000266"/>
    <property type="project" value="RGD"/>
</dbReference>
<dbReference type="FunFam" id="1.20.120.350:FF:000001">
    <property type="entry name" value="Voltage-dependent L-type calcium channel subunit alpha"/>
    <property type="match status" value="1"/>
</dbReference>
<dbReference type="FunFam" id="1.10.238.10:FF:000063">
    <property type="entry name" value="Voltage-dependent N-type calcium channel subunit alpha"/>
    <property type="match status" value="1"/>
</dbReference>
<dbReference type="FunFam" id="1.20.120.350:FF:000011">
    <property type="entry name" value="Voltage-dependent N-type calcium channel subunit alpha"/>
    <property type="match status" value="1"/>
</dbReference>
<dbReference type="FunFam" id="1.20.120.350:FF:000013">
    <property type="entry name" value="Voltage-dependent N-type calcium channel subunit alpha"/>
    <property type="match status" value="1"/>
</dbReference>
<dbReference type="FunFam" id="1.20.120.350:FF:000015">
    <property type="entry name" value="Voltage-dependent N-type calcium channel subunit alpha"/>
    <property type="match status" value="1"/>
</dbReference>
<dbReference type="FunFam" id="1.10.287.70:FF:000023">
    <property type="entry name" value="Voltage-dependent R-type calcium channel subunit alpha"/>
    <property type="match status" value="1"/>
</dbReference>
<dbReference type="FunFam" id="1.10.287.70:FF:000025">
    <property type="entry name" value="Voltage-dependent R-type calcium channel subunit alpha"/>
    <property type="match status" value="1"/>
</dbReference>
<dbReference type="Gene3D" id="1.10.287.70">
    <property type="match status" value="4"/>
</dbReference>
<dbReference type="Gene3D" id="6.10.250.2180">
    <property type="match status" value="1"/>
</dbReference>
<dbReference type="Gene3D" id="6.10.250.2500">
    <property type="match status" value="1"/>
</dbReference>
<dbReference type="Gene3D" id="1.20.120.350">
    <property type="entry name" value="Voltage-gated potassium channels. Chain C"/>
    <property type="match status" value="4"/>
</dbReference>
<dbReference type="InterPro" id="IPR005448">
    <property type="entry name" value="CACNA1A"/>
</dbReference>
<dbReference type="InterPro" id="IPR031649">
    <property type="entry name" value="GPHH_dom"/>
</dbReference>
<dbReference type="InterPro" id="IPR005821">
    <property type="entry name" value="Ion_trans_dom"/>
</dbReference>
<dbReference type="InterPro" id="IPR014873">
    <property type="entry name" value="VDCC_a1su_IQ"/>
</dbReference>
<dbReference type="InterPro" id="IPR050599">
    <property type="entry name" value="VDCC_alpha-1_subunit"/>
</dbReference>
<dbReference type="InterPro" id="IPR002077">
    <property type="entry name" value="VDCCAlpha1"/>
</dbReference>
<dbReference type="InterPro" id="IPR027359">
    <property type="entry name" value="Volt_channel_dom_sf"/>
</dbReference>
<dbReference type="PANTHER" id="PTHR45628">
    <property type="entry name" value="VOLTAGE-DEPENDENT CALCIUM CHANNEL TYPE A SUBUNIT ALPHA-1"/>
    <property type="match status" value="1"/>
</dbReference>
<dbReference type="PANTHER" id="PTHR45628:SF3">
    <property type="entry name" value="VOLTAGE-DEPENDENT P_Q-TYPE CALCIUM CHANNEL SUBUNIT ALPHA-1A"/>
    <property type="match status" value="1"/>
</dbReference>
<dbReference type="Pfam" id="PF08763">
    <property type="entry name" value="Ca_chan_IQ"/>
    <property type="match status" value="1"/>
</dbReference>
<dbReference type="Pfam" id="PF16905">
    <property type="entry name" value="GPHH"/>
    <property type="match status" value="1"/>
</dbReference>
<dbReference type="Pfam" id="PF00520">
    <property type="entry name" value="Ion_trans"/>
    <property type="match status" value="4"/>
</dbReference>
<dbReference type="PRINTS" id="PR00167">
    <property type="entry name" value="CACHANNEL"/>
</dbReference>
<dbReference type="PRINTS" id="PR01632">
    <property type="entry name" value="PQVDCCALPHA1"/>
</dbReference>
<dbReference type="SMART" id="SM01062">
    <property type="entry name" value="Ca_chan_IQ"/>
    <property type="match status" value="1"/>
</dbReference>
<dbReference type="SUPFAM" id="SSF81324">
    <property type="entry name" value="Voltage-gated potassium channels"/>
    <property type="match status" value="4"/>
</dbReference>
<comment type="function">
    <text evidence="1 8">Voltage-sensitive calcium channels (VSCC) mediate the entry of calcium ions into excitable cells and are also involved in a variety of calcium-dependent processes, including muscle contraction, hormone or neurotransmitter release, gene expression, cell motility, cell division and cell death. The isoform alpha-1A gives rise to P and/or Q-type calcium currents. P/Q-type calcium channels belong to the 'high-voltage activated' (HVA) group and are specifically blocked by the spider omega-agatoxin-IVA (AC P30288) (PubMed:1311418). They are however insensitive to dihydropyridines (DHP).</text>
</comment>
<comment type="catalytic activity">
    <reaction evidence="1">
        <text>Ca(2+)(in) = Ca(2+)(out)</text>
        <dbReference type="Rhea" id="RHEA:29671"/>
        <dbReference type="ChEBI" id="CHEBI:29108"/>
    </reaction>
</comment>
<comment type="subunit">
    <text evidence="1 7 8">Voltage-dependent calcium channels are multisubunit complexes, consisting of alpha-1, alpha-2, beta and delta subunits in a 1:1:1:1 ratio. The channel activity is directed by the pore-forming and voltage-sensitive alpha-1 subunit. In many cases, this subunit is sufficient to generate voltage-sensitive calcium channel activity. The auxiliary subunits beta and alpha-2/delta linked by a disulfide bridge regulate the channel activity (By similarity). Interacts (via C-terminal CDB motif) with CABP1 in the pre- and postsynaptic membranes (PubMed:11865310). Interacts with the spider omega-agatoxin-IVA (AC P30288) (PubMed:1311418). Interacts with TSPOAP1 (By similarity).</text>
</comment>
<comment type="interaction">
    <interactant intactId="EBI-3507416">
        <id>P54282</id>
    </interactant>
    <interactant intactId="EBI-2640645">
        <id>P11275</id>
        <label>Camk2a</label>
    </interactant>
    <organismsDiffer>false</organismsDiffer>
    <experiments>3</experiments>
</comment>
<comment type="interaction">
    <interactant intactId="EBI-3507416">
        <id>P54282</id>
    </interactant>
    <interactant intactId="EBI-3507436">
        <id>Q9JIR4</id>
        <label>Rims1</label>
    </interactant>
    <organismsDiffer>false</organismsDiffer>
    <experiments>4</experiments>
</comment>
<comment type="subcellular location">
    <subcellularLocation>
        <location evidence="1">Cell membrane</location>
        <topology evidence="5">Multi-pass membrane protein</topology>
    </subcellularLocation>
</comment>
<comment type="alternative products">
    <event type="alternative splicing"/>
    <isoform>
        <id>P54282-1</id>
        <name>1</name>
        <sequence type="displayed"/>
    </isoform>
    <isoform>
        <id>P54282-2</id>
        <name>2</name>
        <name>RKC8</name>
        <sequence type="described" ref="VSP_000881"/>
    </isoform>
    <isoform>
        <id>P54282-3</id>
        <name>3</name>
        <name>RBA-65</name>
        <sequence type="not described"/>
    </isoform>
    <isoform>
        <id>P54282-4</id>
        <name>4</name>
        <sequence type="not described"/>
    </isoform>
    <text>Additional isoforms seem to exist.</text>
</comment>
<comment type="tissue specificity">
    <text>Brain specific. Purkinje cells contain predominantly P-type VSCC, the Q-type being a prominent calcium current in cerebellar granule cells. Also found in heart, in kidney distal convoluted tubule (DCT), and in pituitary.</text>
</comment>
<comment type="domain">
    <text>Each of the four internal repeats contains five hydrophobic transmembrane segments (S1, S2, S3, S5, S6) and one positively charged transmembrane segment (S4). S4 segments probably represent the voltage-sensor and are characterized by a series of positively charged amino acids at every third position.</text>
</comment>
<comment type="similarity">
    <text evidence="10">Belongs to the calcium channel alpha-1 subunit (TC 1.A.1.11) family. CACNA1A subfamily.</text>
</comment>
<organism>
    <name type="scientific">Rattus norvegicus</name>
    <name type="common">Rat</name>
    <dbReference type="NCBI Taxonomy" id="10116"/>
    <lineage>
        <taxon>Eukaryota</taxon>
        <taxon>Metazoa</taxon>
        <taxon>Chordata</taxon>
        <taxon>Craniata</taxon>
        <taxon>Vertebrata</taxon>
        <taxon>Euteleostomi</taxon>
        <taxon>Mammalia</taxon>
        <taxon>Eutheria</taxon>
        <taxon>Euarchontoglires</taxon>
        <taxon>Glires</taxon>
        <taxon>Rodentia</taxon>
        <taxon>Myomorpha</taxon>
        <taxon>Muroidea</taxon>
        <taxon>Muridae</taxon>
        <taxon>Murinae</taxon>
        <taxon>Rattus</taxon>
    </lineage>
</organism>
<keyword id="KW-0025">Alternative splicing</keyword>
<keyword id="KW-0106">Calcium</keyword>
<keyword id="KW-0107">Calcium channel</keyword>
<keyword id="KW-0109">Calcium transport</keyword>
<keyword id="KW-1003">Cell membrane</keyword>
<keyword id="KW-1015">Disulfide bond</keyword>
<keyword id="KW-0325">Glycoprotein</keyword>
<keyword id="KW-0407">Ion channel</keyword>
<keyword id="KW-0406">Ion transport</keyword>
<keyword id="KW-0472">Membrane</keyword>
<keyword id="KW-0479">Metal-binding</keyword>
<keyword id="KW-0597">Phosphoprotein</keyword>
<keyword id="KW-1185">Reference proteome</keyword>
<keyword id="KW-0677">Repeat</keyword>
<keyword id="KW-0812">Transmembrane</keyword>
<keyword id="KW-1133">Transmembrane helix</keyword>
<keyword id="KW-0813">Transport</keyword>
<keyword id="KW-0851">Voltage-gated channel</keyword>
<sequence>MARFGDEMPGRYGAGGGGSGPAAGVVVGAAGGRGAGGSRQGGQPGAQRMYKQSMAQRARTMALYNPIPVRQNCLTVNRSLFLFSEDNVVRKYAKKITEWPPFEYMILATIIANCIVLALEQHLPDDDKTPMSERLDDTEPYFIGIFCFEAGIKIVALGFAFHKGSYLRNGWNVMDFVVVLTGILATVGTEFDLRTLRAVRVLRPLKLVSGIPSLQVVLKSIMKAMIPLLQIGLLLFFAILIFAIIGLEFYMGKFHTTCFEEGTDDIQGESPAPCGTEEPARTCPNGTKCQPYWEGPNNGITQFDNILFAVLTVFQCITMEGWTDLLYNSNDASGNTWNWLYFIPLIIIGSFFMLNLVLGVLSGEFAKERERVENRRAFLKLRRQQQIERELNGYMEWISKAEEVILAEDETDVEQRHPFDGALRRATLKKSKTDLLNPEEAEDQLADIASVGSPFARASIKSAKLENSTFFHKKERRMRFYIRRMVKTQAFYWTVLSLVALNTLWLAIVHYNQPEWLSDFLYYAEFIFLGLFMSEMFIKMYGLGTRPYFHSSFNCFDCGVIIGSIFEVIWAVIKPGTSFGISVLRALRLLRIFKVTKYWASLRNLVVSLLNSMKSIISLLFLLFLFIVVFALLGMQLFGGQFNFDEGTPPTNFDTFPAAIMTVFQILTGEDWNEVMYDEIKSQGGVQGGMVFSIYFIVLTLFGNYTLLNVFLAIAVDNLANAQELTKDEQEEEEAANQKLALQKAKEVAEVSPLSAANMSIAVKEQQKNQKPAKSVWEQRTSEMRKQNLLASREALYGDAAERWPTTYARPLRPDVKTHLDRPLVVDPQENRNNNTNKSRAPEALRQTARPRESARDPDARRAWPSSPERAPGREGPYGRESEPQQREHAPPREHVPWDADPERAKAGDAPRRHTHRPVAEGEPRRHRARRRPGDEPDDRPERRPRPRDATRPARAADGEGDDGERKRRHRHGPPAHDDRERRHRRRKESQGSGVPMSGPNLSTTRPIQQDLGRQDLPLAEDLDNMKNNKLATGEPASPHDSLGHSGLPPSPAKIGNSTNPGPALATNPQNAASRRTPNNPGNPSNPGPPKTPENSLIVTNPSSTQPNSAKTARKPEHMAVEIPPACPPLNHTVVQVNKNANPDPLPKKEEEKKEEEEADPGEDGPKPMPPYSSMFILSTTNPLRRLCHYILNLRYFEMCILMVIAMSSIALAAEDPVQPNAPRNNVLRYFDYVFTGVFTFEMVIKMIDLGLVLHQGAYFRDLWNILDFIVVSGALVAFAFTGNSKGKDINTIKSLRVLRVLRPLKTIKRLPKLKAVFDCVVNSLKNVFNILIVYMLFMFIFAVVAVQLFKGKFFHCTDESKEFERDCRGKYLLYEKNEVKARDREWKKYDFHYDNVLWALLTLFTVSTGEGWPQVLKHSVDATFENQGPSPGYRMEMSIFYVVYFVVFPFFFVNIFVALIIITFQEQGDKMMEEYSLEKNERACIDFAISAKPLTRHMPQNKQSFQYRMWQFVVSPPFEYTIMAMIALNTIVLMMKFYGASVAYENALRVFNIVFTSLFSLECVLKVMAFGILNYFRDAWNIFDFVTVLGSITDILVTEFGNNFINLSFLRLFRAARLIKLLRQGYTIRILLWTFVQSFKALPYVCLLIAMLFFIYAIIGMQVFGNIGIDGEDEDSDEDEFQITEHNNFRTFFQALMLLFRSATGEAWHNIMLSCLSGKPCDKNSGIQKPECGNEFAYFYFVSFIFLCSFLMLNLFVAVIMDNFEYLTRDSSILGPHHLDEYVRVWAEYDPAACGRIHYKDMYSLLRVISPPLGLGKKCPHRVACKRLLRMDLPVADDNTVHFNSTLMALIRTALDIKIAKGGADKQQMDAELRKEMMAIWPNLSQKTLDLLVTPHKSTDLTVGKIYAAMMIMEYYRQSKAKKLQAMREEQNRTPLMFQRMEPPSPTQEGGPSQNALPSTQLDPGGGLMAQESSMKESPSWVTQRAQEMFQKTGTWSPERGPPIDMPNSQPNSQSVEMREMGTDGYSDSEHYLPMEGQTRAASMPRLPAENQRRRGRPRGNNLSTISDTSPMKRSASVLGPKARRLDDYSLERVPPEENQRYHQRRRDRGHRTSERSLGRYTDVDTGLGTDLSMTTQSGDLPSKDRDQDRGRPKDRKHRPHHHHHHHHHHPPAPDRERYAQERPDTGRARAREQRWSRSPSEGREHATHRQ</sequence>
<feature type="chain" id="PRO_0000053919" description="Voltage-dependent P/Q-type calcium channel subunit alpha-1A">
    <location>
        <begin position="1"/>
        <end position="2212"/>
    </location>
</feature>
<feature type="topological domain" description="Cytoplasmic" evidence="5">
    <location>
        <begin position="1"/>
        <end position="100"/>
    </location>
</feature>
<feature type="transmembrane region" description="Helical; Name=S1 of repeat I" evidence="5">
    <location>
        <begin position="101"/>
        <end position="119"/>
    </location>
</feature>
<feature type="topological domain" description="Extracellular" evidence="5">
    <location>
        <begin position="120"/>
        <end position="138"/>
    </location>
</feature>
<feature type="transmembrane region" description="Helical; Name=S2 of repeat I" evidence="5">
    <location>
        <begin position="139"/>
        <end position="156"/>
    </location>
</feature>
<feature type="topological domain" description="Cytoplasmic" evidence="5">
    <location>
        <begin position="157"/>
        <end position="168"/>
    </location>
</feature>
<feature type="transmembrane region" description="Helical; Name=S3 of repeat I" evidence="5">
    <location>
        <begin position="169"/>
        <end position="184"/>
    </location>
</feature>
<feature type="topological domain" description="Extracellular" evidence="5">
    <location>
        <begin position="185"/>
        <end position="192"/>
    </location>
</feature>
<feature type="transmembrane region" description="Helical; Name=S4 of repeat I" evidence="5">
    <location>
        <begin position="193"/>
        <end position="211"/>
    </location>
</feature>
<feature type="topological domain" description="Cytoplasmic" evidence="5">
    <location>
        <begin position="212"/>
        <end position="230"/>
    </location>
</feature>
<feature type="transmembrane region" description="Helical; Name=S5 of repeat I" evidence="5">
    <location>
        <begin position="231"/>
        <end position="250"/>
    </location>
</feature>
<feature type="topological domain" description="Extracellular" evidence="5">
    <location>
        <begin position="251"/>
        <end position="337"/>
    </location>
</feature>
<feature type="transmembrane region" description="Helical; Name=S6 of repeat I" evidence="5">
    <location>
        <begin position="338"/>
        <end position="362"/>
    </location>
</feature>
<feature type="topological domain" description="Cytoplasmic" evidence="5">
    <location>
        <begin position="363"/>
        <end position="489"/>
    </location>
</feature>
<feature type="transmembrane region" description="Helical; Name=S1 of repeat II" evidence="5">
    <location>
        <begin position="490"/>
        <end position="509"/>
    </location>
</feature>
<feature type="topological domain" description="Extracellular" evidence="5">
    <location>
        <begin position="510"/>
        <end position="523"/>
    </location>
</feature>
<feature type="transmembrane region" description="Helical; Name=S2 of repeat II" evidence="5">
    <location>
        <begin position="524"/>
        <end position="543"/>
    </location>
</feature>
<feature type="topological domain" description="Cytoplasmic" evidence="5">
    <location>
        <begin position="544"/>
        <end position="551"/>
    </location>
</feature>
<feature type="transmembrane region" description="Helical; Name=S3 of repeat II" evidence="5">
    <location>
        <begin position="552"/>
        <end position="570"/>
    </location>
</feature>
<feature type="topological domain" description="Extracellular" evidence="5">
    <location>
        <begin position="571"/>
        <end position="580"/>
    </location>
</feature>
<feature type="transmembrane region" description="Helical; Name=S4 of repeat II" evidence="5">
    <location>
        <begin position="581"/>
        <end position="599"/>
    </location>
</feature>
<feature type="topological domain" description="Cytoplasmic" evidence="5">
    <location>
        <begin position="600"/>
        <end position="618"/>
    </location>
</feature>
<feature type="transmembrane region" description="Helical; Name=S5 of repeat II" evidence="5">
    <location>
        <begin position="619"/>
        <end position="638"/>
    </location>
</feature>
<feature type="topological domain" description="Extracellular" evidence="5">
    <location>
        <begin position="639"/>
        <end position="691"/>
    </location>
</feature>
<feature type="transmembrane region" description="Helical; Name=S6 of repeat II" evidence="5">
    <location>
        <begin position="692"/>
        <end position="716"/>
    </location>
</feature>
<feature type="topological domain" description="Cytoplasmic" evidence="5">
    <location>
        <begin position="717"/>
        <end position="1190"/>
    </location>
</feature>
<feature type="transmembrane region" description="Helical; Name=S1 of repeat III" evidence="5">
    <location>
        <begin position="1191"/>
        <end position="1214"/>
    </location>
</feature>
<feature type="topological domain" description="Extracellular" evidence="5">
    <location>
        <begin position="1215"/>
        <end position="1231"/>
    </location>
</feature>
<feature type="transmembrane region" description="Helical; Name=S2 of repeat III" evidence="5">
    <location>
        <begin position="1232"/>
        <end position="1251"/>
    </location>
</feature>
<feature type="topological domain" description="Cytoplasmic" evidence="5">
    <location>
        <begin position="1252"/>
        <end position="1258"/>
    </location>
</feature>
<feature type="transmembrane region" description="Helical; Name=S3 of repeat III" evidence="5">
    <location>
        <begin position="1259"/>
        <end position="1282"/>
    </location>
</feature>
<feature type="topological domain" description="Extracellular" evidence="5">
    <location>
        <begin position="1283"/>
        <end position="1293"/>
    </location>
</feature>
<feature type="transmembrane region" description="Helical; Name=S4 of repeat III" evidence="5">
    <location>
        <begin position="1294"/>
        <end position="1311"/>
    </location>
</feature>
<feature type="topological domain" description="Cytoplasmic" evidence="5">
    <location>
        <begin position="1312"/>
        <end position="1330"/>
    </location>
</feature>
<feature type="transmembrane region" description="Helical; Name=S5 of repeat III" evidence="5">
    <location>
        <begin position="1331"/>
        <end position="1350"/>
    </location>
</feature>
<feature type="topological domain" description="Extracellular" evidence="5">
    <location>
        <begin position="1351"/>
        <end position="1437"/>
    </location>
</feature>
<feature type="transmembrane region" description="Helical; Name=S6 of repeat III" evidence="5">
    <location>
        <begin position="1438"/>
        <end position="1462"/>
    </location>
</feature>
<feature type="topological domain" description="Cytoplasmic" evidence="5">
    <location>
        <begin position="1463"/>
        <end position="1518"/>
    </location>
</feature>
<feature type="transmembrane region" description="Helical; Name=S1 of repeat IV" evidence="5">
    <location>
        <begin position="1519"/>
        <end position="1537"/>
    </location>
</feature>
<feature type="topological domain" description="Extracellular" evidence="5">
    <location>
        <begin position="1538"/>
        <end position="1551"/>
    </location>
</feature>
<feature type="transmembrane region" description="Helical; Name=S2 of repeat IV" evidence="5">
    <location>
        <begin position="1552"/>
        <end position="1573"/>
    </location>
</feature>
<feature type="topological domain" description="Cytoplasmic" evidence="5">
    <location>
        <begin position="1574"/>
        <end position="1580"/>
    </location>
</feature>
<feature type="transmembrane region" description="Helical; Name=S3 of repeat IV" evidence="5">
    <location>
        <begin position="1581"/>
        <end position="1600"/>
    </location>
</feature>
<feature type="topological domain" description="Extracellular" evidence="5">
    <location>
        <begin position="1601"/>
        <end position="1607"/>
    </location>
</feature>
<feature type="transmembrane region" description="Helical; Name=S4 of repeat IV" evidence="5">
    <location>
        <begin position="1608"/>
        <end position="1626"/>
    </location>
</feature>
<feature type="topological domain" description="Cytoplasmic" evidence="5">
    <location>
        <begin position="1627"/>
        <end position="1645"/>
    </location>
</feature>
<feature type="transmembrane region" description="Helical; Name=S5 of repeat IV" evidence="5">
    <location>
        <begin position="1646"/>
        <end position="1665"/>
    </location>
</feature>
<feature type="topological domain" description="Extracellular" evidence="5">
    <location>
        <begin position="1666"/>
        <end position="1737"/>
    </location>
</feature>
<feature type="transmembrane region" description="Helical; Name=S6 of repeat IV" evidence="5">
    <location>
        <begin position="1738"/>
        <end position="1763"/>
    </location>
</feature>
<feature type="topological domain" description="Cytoplasmic" evidence="5">
    <location>
        <begin position="1764"/>
        <end position="2212"/>
    </location>
</feature>
<feature type="repeat" description="I">
    <location>
        <begin position="87"/>
        <end position="365"/>
    </location>
</feature>
<feature type="repeat" description="II">
    <location>
        <begin position="475"/>
        <end position="719"/>
    </location>
</feature>
<feature type="repeat" description="III">
    <location>
        <begin position="1182"/>
        <end position="1465"/>
    </location>
</feature>
<feature type="repeat" description="IV">
    <location>
        <begin position="1502"/>
        <end position="1765"/>
    </location>
</feature>
<feature type="region of interest" description="Binding to the beta subunit" evidence="3">
    <location>
        <begin position="385"/>
        <end position="402"/>
    </location>
</feature>
<feature type="region of interest" description="Disordered" evidence="6">
    <location>
        <begin position="814"/>
        <end position="1117"/>
    </location>
</feature>
<feature type="region of interest" description="Disordered" evidence="6">
    <location>
        <begin position="1137"/>
        <end position="1170"/>
    </location>
</feature>
<feature type="region of interest" description="Disordered" evidence="6">
    <location>
        <begin position="1940"/>
        <end position="2212"/>
    </location>
</feature>
<feature type="compositionally biased region" description="Basic and acidic residues" evidence="6">
    <location>
        <begin position="814"/>
        <end position="824"/>
    </location>
</feature>
<feature type="compositionally biased region" description="Basic and acidic residues" evidence="6">
    <location>
        <begin position="850"/>
        <end position="862"/>
    </location>
</feature>
<feature type="compositionally biased region" description="Basic and acidic residues" evidence="6">
    <location>
        <begin position="871"/>
        <end position="924"/>
    </location>
</feature>
<feature type="compositionally biased region" description="Basic and acidic residues" evidence="6">
    <location>
        <begin position="932"/>
        <end position="958"/>
    </location>
</feature>
<feature type="compositionally biased region" description="Polar residues" evidence="6">
    <location>
        <begin position="1056"/>
        <end position="1073"/>
    </location>
</feature>
<feature type="compositionally biased region" description="Low complexity" evidence="6">
    <location>
        <begin position="1074"/>
        <end position="1083"/>
    </location>
</feature>
<feature type="compositionally biased region" description="Polar residues" evidence="6">
    <location>
        <begin position="1094"/>
        <end position="1111"/>
    </location>
</feature>
<feature type="compositionally biased region" description="Acidic residues" evidence="6">
    <location>
        <begin position="1153"/>
        <end position="1163"/>
    </location>
</feature>
<feature type="compositionally biased region" description="Polar residues" evidence="6">
    <location>
        <begin position="1948"/>
        <end position="1963"/>
    </location>
</feature>
<feature type="compositionally biased region" description="Polar residues" evidence="6">
    <location>
        <begin position="1972"/>
        <end position="1997"/>
    </location>
</feature>
<feature type="compositionally biased region" description="Polar residues" evidence="6">
    <location>
        <begin position="2008"/>
        <end position="2017"/>
    </location>
</feature>
<feature type="compositionally biased region" description="Basic and acidic residues" evidence="6">
    <location>
        <begin position="2018"/>
        <end position="2034"/>
    </location>
</feature>
<feature type="compositionally biased region" description="Polar residues" evidence="6">
    <location>
        <begin position="2064"/>
        <end position="2073"/>
    </location>
</feature>
<feature type="compositionally biased region" description="Basic and acidic residues" evidence="6">
    <location>
        <begin position="2085"/>
        <end position="2102"/>
    </location>
</feature>
<feature type="compositionally biased region" description="Basic and acidic residues" evidence="6">
    <location>
        <begin position="2143"/>
        <end position="2153"/>
    </location>
</feature>
<feature type="compositionally biased region" description="Basic residues" evidence="6">
    <location>
        <begin position="2154"/>
        <end position="2172"/>
    </location>
</feature>
<feature type="compositionally biased region" description="Basic and acidic residues" evidence="6">
    <location>
        <begin position="2173"/>
        <end position="2212"/>
    </location>
</feature>
<feature type="binding site" evidence="2">
    <location>
        <position position="320"/>
    </location>
    <ligand>
        <name>Ca(2+)</name>
        <dbReference type="ChEBI" id="CHEBI:29108"/>
    </ligand>
</feature>
<feature type="binding site" evidence="2">
    <location>
        <position position="670"/>
    </location>
    <ligand>
        <name>Ca(2+)</name>
        <dbReference type="ChEBI" id="CHEBI:29108"/>
    </ligand>
</feature>
<feature type="binding site" evidence="2">
    <location>
        <position position="1411"/>
    </location>
    <ligand>
        <name>Ca(2+)</name>
        <dbReference type="ChEBI" id="CHEBI:29108"/>
    </ligand>
</feature>
<feature type="site" description="Binds to omega-Aga-IVA" evidence="3">
    <location>
        <position position="1600"/>
    </location>
</feature>
<feature type="modified residue" description="Phosphothreonine" evidence="4">
    <location>
        <position position="411"/>
    </location>
</feature>
<feature type="modified residue" description="Phosphoserine" evidence="4">
    <location>
        <position position="450"/>
    </location>
</feature>
<feature type="modified residue" description="Phosphoserine" evidence="12">
    <location>
        <position position="453"/>
    </location>
</feature>
<feature type="modified residue" description="Phosphoserine" evidence="12">
    <location>
        <position position="752"/>
    </location>
</feature>
<feature type="modified residue" description="Phosphoserine" evidence="12">
    <location>
        <position position="755"/>
    </location>
</feature>
<feature type="modified residue" description="Phosphoserine" evidence="4">
    <location>
        <position position="792"/>
    </location>
</feature>
<feature type="modified residue" description="Phosphoserine" evidence="4">
    <location>
        <position position="1038"/>
    </location>
</feature>
<feature type="modified residue" description="Phosphoserine" evidence="4">
    <location>
        <position position="1042"/>
    </location>
</feature>
<feature type="modified residue" description="Phosphoserine" evidence="4">
    <location>
        <position position="1051"/>
    </location>
</feature>
<feature type="modified residue" description="Phosphothreonine" evidence="4">
    <location>
        <position position="1935"/>
    </location>
</feature>
<feature type="modified residue" description="Phosphoserine" evidence="12">
    <location>
        <position position="1998"/>
    </location>
</feature>
<feature type="modified residue" description="Phosphoserine" evidence="4">
    <location>
        <position position="2016"/>
    </location>
</feature>
<feature type="modified residue" description="Phosphoserine" evidence="12">
    <location>
        <position position="2028"/>
    </location>
</feature>
<feature type="modified residue" description="Phosphoserine" evidence="12">
    <location>
        <position position="2030"/>
    </location>
</feature>
<feature type="modified residue" description="Phosphoserine" evidence="12">
    <location>
        <position position="2071"/>
    </location>
</feature>
<feature type="modified residue" description="Phosphoserine" evidence="12">
    <location>
        <position position="2091"/>
    </location>
</feature>
<feature type="glycosylation site" description="N-linked (GlcNAc...) asparagine" evidence="5">
    <location>
        <position position="285"/>
    </location>
</feature>
<feature type="glycosylation site" description="N-linked (GlcNAc...) asparagine" evidence="5">
    <location>
        <position position="1607"/>
    </location>
</feature>
<feature type="splice variant" id="VSP_000881" description="In isoform 2." evidence="9">
    <original>G</original>
    <variation>GNP</variation>
    <location>
        <position position="1602"/>
    </location>
</feature>
<gene>
    <name evidence="11" type="primary">Cacna1a</name>
    <name type="synonym">Cach4</name>
    <name type="synonym">Cacn3</name>
    <name type="synonym">Cacnl1a4</name>
</gene>
<accession>P54282</accession>
<accession>Q01541</accession>
<protein>
    <recommendedName>
        <fullName>Voltage-dependent P/Q-type calcium channel subunit alpha-1A</fullName>
    </recommendedName>
    <alternativeName>
        <fullName>Brain calcium channel I</fullName>
        <shortName>BI</shortName>
    </alternativeName>
    <alternativeName>
        <fullName>Calcium channel, L type, alpha-1 polypeptide, isoform 4</fullName>
    </alternativeName>
    <alternativeName>
        <fullName>Rat brain class A</fullName>
        <shortName>RBA-I</shortName>
    </alternativeName>
    <alternativeName>
        <fullName>Voltage-gated calcium channel subunit alpha Cav2.1</fullName>
    </alternativeName>
</protein>
<name>CAC1A_RAT</name>
<evidence type="ECO:0000250" key="1">
    <source>
        <dbReference type="UniProtKB" id="O00555"/>
    </source>
</evidence>
<evidence type="ECO:0000250" key="2">
    <source>
        <dbReference type="UniProtKB" id="P07293"/>
    </source>
</evidence>
<evidence type="ECO:0000250" key="3">
    <source>
        <dbReference type="UniProtKB" id="P27884"/>
    </source>
</evidence>
<evidence type="ECO:0000250" key="4">
    <source>
        <dbReference type="UniProtKB" id="P97445"/>
    </source>
</evidence>
<evidence type="ECO:0000255" key="5"/>
<evidence type="ECO:0000256" key="6">
    <source>
        <dbReference type="SAM" id="MobiDB-lite"/>
    </source>
</evidence>
<evidence type="ECO:0000269" key="7">
    <source>
    </source>
</evidence>
<evidence type="ECO:0000269" key="8">
    <source>
    </source>
</evidence>
<evidence type="ECO:0000303" key="9">
    <source>
    </source>
</evidence>
<evidence type="ECO:0000305" key="10"/>
<evidence type="ECO:0000312" key="11">
    <source>
        <dbReference type="RGD" id="2244"/>
    </source>
</evidence>
<evidence type="ECO:0007744" key="12">
    <source>
    </source>
</evidence>
<reference key="1">
    <citation type="journal article" date="1991" name="Proc. Natl. Acad. Sci. U.S.A.">
        <title>Primary structure of a calcium channel that is highly expressed in the rat cerebellum.</title>
        <authorList>
            <person name="Starr T.V.B."/>
            <person name="Prystay W."/>
            <person name="Snutch T.P."/>
        </authorList>
    </citation>
    <scope>NUCLEOTIDE SEQUENCE [MRNA]</scope>
    <source>
        <strain>Sprague-Dawley</strain>
        <tissue>Brain</tissue>
    </source>
</reference>
<reference key="2">
    <citation type="journal article" date="1992" name="Proc. Natl. Acad. Sci. U.S.A.">
        <title>Molecular characterization and nephron distribution of a family of transcripts encoding the pore-forming subunit of Ca2+ channels in the kidney.</title>
        <authorList>
            <person name="Yu A.S.L."/>
            <person name="Hebert S.C."/>
            <person name="Brenner B.M."/>
            <person name="Lytton J."/>
        </authorList>
    </citation>
    <scope>NUCLEOTIDE SEQUENCE [MRNA] OF 1354-1659 (ISOFORM 2)</scope>
    <source>
        <tissue>Kidney</tissue>
    </source>
</reference>
<reference key="3">
    <citation type="journal article" date="1990" name="Proc. Natl. Acad. Sci. U.S.A.">
        <title>Rat brain expresses a heterogeneous family of calcium channels.</title>
        <authorList>
            <person name="Snutch T.P."/>
            <person name="Leonard J.P."/>
            <person name="Gilbert M.M."/>
            <person name="Lester H.A."/>
            <person name="Davidson N."/>
        </authorList>
    </citation>
    <scope>NUCLEOTIDE SEQUENCE [MRNA] OF 1435-1667 (ISOFORM 3)</scope>
</reference>
<reference key="4">
    <citation type="journal article" date="1992" name="Nature">
        <title>P-type calcium channels blocked by the spider toxin omega-Aga-IVA.</title>
        <authorList>
            <person name="Mintz I.M."/>
            <person name="Venema V.J."/>
            <person name="Swiderek K.M."/>
            <person name="Lee T.D."/>
            <person name="Bean B.P."/>
            <person name="Adams M.E."/>
        </authorList>
    </citation>
    <scope>FUNCTION</scope>
    <scope>INTERACTION WITH SPIDER OMEGA-AGATOXIN-IVA</scope>
    <scope>SUBUNIT</scope>
    <source>
        <tissue>Venom</tissue>
    </source>
</reference>
<reference key="5">
    <citation type="journal article" date="2002" name="Nat. Neurosci.">
        <title>Differential modulation of Ca(v)2.1 channels by calmodulin and Ca2+-binding protein 1.</title>
        <authorList>
            <person name="Lee A."/>
            <person name="Westenbroek R.E."/>
            <person name="Haeseleer F."/>
            <person name="Palczewski K."/>
            <person name="Scheuer T."/>
            <person name="Catterall W.A."/>
        </authorList>
    </citation>
    <scope>INTERACTION WITH CABP1</scope>
</reference>
<reference key="6">
    <citation type="journal article" date="2012" name="Nat. Commun.">
        <title>Quantitative maps of protein phosphorylation sites across 14 different rat organs and tissues.</title>
        <authorList>
            <person name="Lundby A."/>
            <person name="Secher A."/>
            <person name="Lage K."/>
            <person name="Nordsborg N.B."/>
            <person name="Dmytriyev A."/>
            <person name="Lundby C."/>
            <person name="Olsen J.V."/>
        </authorList>
    </citation>
    <scope>PHOSPHORYLATION [LARGE SCALE ANALYSIS] AT SER-453; SER-752; SER-755; SER-1998; SER-2028; SER-2030; SER-2071 AND SER-2091</scope>
    <scope>IDENTIFICATION BY MASS SPECTROMETRY [LARGE SCALE ANALYSIS]</scope>
</reference>
<proteinExistence type="evidence at protein level"/>